<keyword id="KW-0027">Amidation</keyword>
<keyword id="KW-0044">Antibiotic</keyword>
<keyword id="KW-0929">Antimicrobial</keyword>
<keyword id="KW-0903">Direct protein sequencing</keyword>
<keyword id="KW-0391">Immunity</keyword>
<keyword id="KW-0399">Innate immunity</keyword>
<keyword id="KW-0964">Secreted</keyword>
<dbReference type="PIR" id="B32021">
    <property type="entry name" value="B32021"/>
</dbReference>
<dbReference type="SMR" id="P14663"/>
<dbReference type="GO" id="GO:0005576">
    <property type="term" value="C:extracellular region"/>
    <property type="evidence" value="ECO:0007669"/>
    <property type="project" value="UniProtKB-SubCell"/>
</dbReference>
<dbReference type="GO" id="GO:0019731">
    <property type="term" value="P:antibacterial humoral response"/>
    <property type="evidence" value="ECO:0007669"/>
    <property type="project" value="InterPro"/>
</dbReference>
<dbReference type="GO" id="GO:0050830">
    <property type="term" value="P:defense response to Gram-positive bacterium"/>
    <property type="evidence" value="ECO:0007669"/>
    <property type="project" value="UniProtKB-ARBA"/>
</dbReference>
<dbReference type="GO" id="GO:0045087">
    <property type="term" value="P:innate immune response"/>
    <property type="evidence" value="ECO:0007669"/>
    <property type="project" value="UniProtKB-KW"/>
</dbReference>
<dbReference type="InterPro" id="IPR000875">
    <property type="entry name" value="Cecropin"/>
</dbReference>
<dbReference type="Pfam" id="PF00272">
    <property type="entry name" value="Cecropin"/>
    <property type="match status" value="1"/>
</dbReference>
<dbReference type="PROSITE" id="PS00268">
    <property type="entry name" value="CECROPIN"/>
    <property type="match status" value="1"/>
</dbReference>
<sequence length="37" mass="3848">WNPFKELERAGQRVRDAIISAGPAVATVGQAAAIARG</sequence>
<evidence type="ECO:0000305" key="1"/>
<evidence type="ECO:0000305" key="2">
    <source>
    </source>
</evidence>
<accession>P14663</accession>
<organism>
    <name type="scientific">Manduca sexta</name>
    <name type="common">Tobacco hawkmoth</name>
    <name type="synonym">Tobacco hornworm</name>
    <dbReference type="NCBI Taxonomy" id="7130"/>
    <lineage>
        <taxon>Eukaryota</taxon>
        <taxon>Metazoa</taxon>
        <taxon>Ecdysozoa</taxon>
        <taxon>Arthropoda</taxon>
        <taxon>Hexapoda</taxon>
        <taxon>Insecta</taxon>
        <taxon>Pterygota</taxon>
        <taxon>Neoptera</taxon>
        <taxon>Endopterygota</taxon>
        <taxon>Lepidoptera</taxon>
        <taxon>Glossata</taxon>
        <taxon>Ditrysia</taxon>
        <taxon>Bombycoidea</taxon>
        <taxon>Sphingidae</taxon>
        <taxon>Sphinginae</taxon>
        <taxon>Sphingini</taxon>
        <taxon>Manduca</taxon>
    </lineage>
</organism>
<proteinExistence type="evidence at protein level"/>
<protein>
    <recommendedName>
        <fullName>Bactericidin B-3</fullName>
    </recommendedName>
    <alternativeName>
        <fullName>Cecropin-like peptide B-3</fullName>
    </alternativeName>
</protein>
<reference key="1">
    <citation type="journal article" date="1988" name="J. Biol. Chem.">
        <title>A family of bacteria-regulated, cecropin D-like peptides from Manduca sexta.</title>
        <authorList>
            <person name="Dickinson L."/>
            <person name="Russel V."/>
            <person name="Dunn P.E."/>
        </authorList>
    </citation>
    <scope>PROTEIN SEQUENCE</scope>
    <scope>AMIDATION AT GLY-37</scope>
</reference>
<comment type="function">
    <text>Cecropins have lytic and antibacterial activity against several Gram-positive and Gram-negative bacteria.</text>
</comment>
<comment type="subcellular location">
    <subcellularLocation>
        <location>Secreted</location>
    </subcellularLocation>
</comment>
<comment type="similarity">
    <text evidence="1">Belongs to the cecropin family.</text>
</comment>
<feature type="peptide" id="PRO_0000044683" description="Bactericidin B-3">
    <location>
        <begin position="1"/>
        <end position="37"/>
    </location>
</feature>
<feature type="modified residue" description="Glycine amide" evidence="2">
    <location>
        <position position="37"/>
    </location>
</feature>
<name>CEC3_MANSE</name>